<comment type="function">
    <text evidence="4">Involved in the degradation of pyridoxine or pyridoxamine (free, phosphate-unbound, forms of vitamin B6). Oxidizes pyridoxal to 4-pyridoxolactone, but does not have activity toward pyridoxal 5'-phosphate, pyridoxine, pyridoxamine, pyridoxamine 5'-phosphate, 4-phthalaldehyde, 2-nitrobenzaldehyde, pyridine, formaldehyde, 2-carboxybenzaldehyde or sugars.</text>
</comment>
<comment type="catalytic activity">
    <reaction evidence="4">
        <text>pyridoxal + NAD(+) = 4-pyridoxolactone + NADH + H(+)</text>
        <dbReference type="Rhea" id="RHEA:21336"/>
        <dbReference type="ChEBI" id="CHEBI:15378"/>
        <dbReference type="ChEBI" id="CHEBI:16871"/>
        <dbReference type="ChEBI" id="CHEBI:17310"/>
        <dbReference type="ChEBI" id="CHEBI:57540"/>
        <dbReference type="ChEBI" id="CHEBI:57945"/>
        <dbReference type="EC" id="1.1.1.107"/>
    </reaction>
</comment>
<comment type="biophysicochemical properties">
    <kinetics>
        <KM evidence="4">0.091 mM for pyridoxal</KM>
        <KM evidence="4">0.28 mM for NAD(+)</KM>
    </kinetics>
    <phDependence>
        <text evidence="4">Optimum pH is 9.2. Retains 66% of maximum activity at pH 8.6 and 57% of maximum activity at pH 10.0.</text>
    </phDependence>
    <temperatureDependence>
        <text evidence="4">Optimum temperature is 50 degrees Celsius. 37% and 33% of maximum activity is seen at 30 and 55 degrees Celsius respectively. Stable for 10 minutes at 45 degrees Celsius or lower, 76% of activity remains following 10 minutes incubation at 50 degrees Celsius and 1.3% of activity remains following 10 minutes incubation at 60 degrees Celsius.</text>
    </temperatureDependence>
</comment>
<comment type="pathway">
    <text evidence="4">Cofactor degradation; B6 vitamer degradation; 4-pyridoxate from pyridoxal: step 1/2.</text>
</comment>
<comment type="subunit">
    <text evidence="4">Homotetramer.</text>
</comment>
<comment type="similarity">
    <text evidence="2">Belongs to the short-chain dehydrogenases/reductases (SDR) family.</text>
</comment>
<name>PLDH_RHILO</name>
<accession>Q988B7</accession>
<protein>
    <recommendedName>
        <fullName evidence="8">Pyridoxal 4-dehydrogenase</fullName>
        <shortName evidence="5">tPLDH</shortName>
        <ecNumber>1.1.1.107</ecNumber>
    </recommendedName>
</protein>
<proteinExistence type="evidence at protein level"/>
<organism>
    <name type="scientific">Mesorhizobium japonicum (strain LMG 29417 / CECT 9101 / MAFF 303099)</name>
    <name type="common">Mesorhizobium loti (strain MAFF 303099)</name>
    <dbReference type="NCBI Taxonomy" id="266835"/>
    <lineage>
        <taxon>Bacteria</taxon>
        <taxon>Pseudomonadati</taxon>
        <taxon>Pseudomonadota</taxon>
        <taxon>Alphaproteobacteria</taxon>
        <taxon>Hyphomicrobiales</taxon>
        <taxon>Phyllobacteriaceae</taxon>
        <taxon>Mesorhizobium</taxon>
    </lineage>
</organism>
<feature type="chain" id="PRO_0000403110" description="Pyridoxal 4-dehydrogenase">
    <location>
        <begin position="1"/>
        <end position="248"/>
    </location>
</feature>
<feature type="active site" description="Proton acceptor" evidence="1 3">
    <location>
        <position position="154"/>
    </location>
</feature>
<feature type="binding site" evidence="1">
    <location>
        <begin position="11"/>
        <end position="35"/>
    </location>
    <ligand>
        <name>NAD(+)</name>
        <dbReference type="ChEBI" id="CHEBI:57540"/>
    </ligand>
</feature>
<feature type="binding site" evidence="1">
    <location>
        <position position="141"/>
    </location>
    <ligand>
        <name>substrate</name>
    </ligand>
</feature>
<feature type="turn" evidence="9">
    <location>
        <begin position="4"/>
        <end position="7"/>
    </location>
</feature>
<feature type="strand" evidence="9">
    <location>
        <begin position="9"/>
        <end position="13"/>
    </location>
</feature>
<feature type="turn" evidence="9">
    <location>
        <begin position="14"/>
        <end position="16"/>
    </location>
</feature>
<feature type="helix" evidence="9">
    <location>
        <begin position="18"/>
        <end position="29"/>
    </location>
</feature>
<feature type="strand" evidence="9">
    <location>
        <begin position="33"/>
        <end position="37"/>
    </location>
</feature>
<feature type="helix" evidence="9">
    <location>
        <begin position="41"/>
        <end position="51"/>
    </location>
</feature>
<feature type="strand" evidence="9">
    <location>
        <begin position="55"/>
        <end position="57"/>
    </location>
</feature>
<feature type="helix" evidence="9">
    <location>
        <begin position="65"/>
        <end position="79"/>
    </location>
</feature>
<feature type="strand" evidence="9">
    <location>
        <begin position="83"/>
        <end position="87"/>
    </location>
</feature>
<feature type="helix" evidence="9">
    <location>
        <begin position="97"/>
        <end position="99"/>
    </location>
</feature>
<feature type="helix" evidence="9">
    <location>
        <begin position="102"/>
        <end position="112"/>
    </location>
</feature>
<feature type="helix" evidence="9">
    <location>
        <begin position="114"/>
        <end position="130"/>
    </location>
</feature>
<feature type="strand" evidence="9">
    <location>
        <begin position="134"/>
        <end position="139"/>
    </location>
</feature>
<feature type="helix" evidence="9">
    <location>
        <begin position="143"/>
        <end position="146"/>
    </location>
</feature>
<feature type="helix" evidence="9">
    <location>
        <begin position="152"/>
        <end position="172"/>
    </location>
</feature>
<feature type="helix" evidence="9">
    <location>
        <begin position="173"/>
        <end position="175"/>
    </location>
</feature>
<feature type="strand" evidence="9">
    <location>
        <begin position="177"/>
        <end position="184"/>
    </location>
</feature>
<feature type="helix" evidence="9">
    <location>
        <begin position="190"/>
        <end position="193"/>
    </location>
</feature>
<feature type="helix" evidence="9">
    <location>
        <begin position="196"/>
        <end position="200"/>
    </location>
</feature>
<feature type="helix" evidence="9">
    <location>
        <begin position="201"/>
        <end position="207"/>
    </location>
</feature>
<feature type="strand" evidence="9">
    <location>
        <begin position="208"/>
        <end position="210"/>
    </location>
</feature>
<feature type="helix" evidence="9">
    <location>
        <begin position="216"/>
        <end position="227"/>
    </location>
</feature>
<feature type="helix" evidence="9">
    <location>
        <begin position="229"/>
        <end position="231"/>
    </location>
</feature>
<feature type="strand" evidence="9">
    <location>
        <begin position="238"/>
        <end position="242"/>
    </location>
</feature>
<evidence type="ECO:0000250" key="1">
    <source>
        <dbReference type="UniProtKB" id="P69167"/>
    </source>
</evidence>
<evidence type="ECO:0000255" key="2"/>
<evidence type="ECO:0000255" key="3">
    <source>
        <dbReference type="PROSITE-ProRule" id="PRU10001"/>
    </source>
</evidence>
<evidence type="ECO:0000269" key="4">
    <source>
    </source>
</evidence>
<evidence type="ECO:0000303" key="5">
    <source>
    </source>
</evidence>
<evidence type="ECO:0000305" key="6"/>
<evidence type="ECO:0000312" key="7">
    <source>
        <dbReference type="EMBL" id="BAB53033.1"/>
    </source>
</evidence>
<evidence type="ECO:0000312" key="8">
    <source>
        <dbReference type="EMBL" id="BAF02533.1"/>
    </source>
</evidence>
<evidence type="ECO:0007829" key="9">
    <source>
        <dbReference type="PDB" id="3RWB"/>
    </source>
</evidence>
<dbReference type="EC" id="1.1.1.107"/>
<dbReference type="EMBL" id="AB248363">
    <property type="protein sequence ID" value="BAF02533.1"/>
    <property type="molecule type" value="Genomic_DNA"/>
</dbReference>
<dbReference type="EMBL" id="BA000012">
    <property type="protein sequence ID" value="BAB53033.1"/>
    <property type="molecule type" value="Genomic_DNA"/>
</dbReference>
<dbReference type="RefSeq" id="WP_010914343.1">
    <property type="nucleotide sequence ID" value="NC_002678.2"/>
</dbReference>
<dbReference type="PDB" id="3NDR">
    <property type="method" value="X-ray"/>
    <property type="resolution" value="2.88 A"/>
    <property type="chains" value="A/B/C/D=2-248"/>
</dbReference>
<dbReference type="PDB" id="3NUG">
    <property type="method" value="X-ray"/>
    <property type="resolution" value="1.79 A"/>
    <property type="chains" value="A/B/C/D=2-248"/>
</dbReference>
<dbReference type="PDB" id="3RWB">
    <property type="method" value="X-ray"/>
    <property type="resolution" value="1.70 A"/>
    <property type="chains" value="A/B/C/D=2-248"/>
</dbReference>
<dbReference type="PDBsum" id="3NDR"/>
<dbReference type="PDBsum" id="3NUG"/>
<dbReference type="PDBsum" id="3RWB"/>
<dbReference type="SMR" id="Q988B7"/>
<dbReference type="KEGG" id="mlo:mlr6807"/>
<dbReference type="PATRIC" id="fig|266835.9.peg.5417"/>
<dbReference type="eggNOG" id="COG1028">
    <property type="taxonomic scope" value="Bacteria"/>
</dbReference>
<dbReference type="HOGENOM" id="CLU_010194_1_2_5"/>
<dbReference type="BioCyc" id="MetaCyc:MONOMER-13148"/>
<dbReference type="BRENDA" id="1.1.1.107">
    <property type="organism ID" value="3243"/>
</dbReference>
<dbReference type="UniPathway" id="UPA00192">
    <property type="reaction ID" value="UER00588"/>
</dbReference>
<dbReference type="EvolutionaryTrace" id="Q988B7"/>
<dbReference type="Proteomes" id="UP000000552">
    <property type="component" value="Chromosome"/>
</dbReference>
<dbReference type="GO" id="GO:0050235">
    <property type="term" value="F:pyridoxal 4-dehydrogenase activity"/>
    <property type="evidence" value="ECO:0000314"/>
    <property type="project" value="UniProtKB"/>
</dbReference>
<dbReference type="GO" id="GO:0042820">
    <property type="term" value="P:vitamin B6 catabolic process"/>
    <property type="evidence" value="ECO:0000314"/>
    <property type="project" value="UniProtKB"/>
</dbReference>
<dbReference type="FunFam" id="3.40.50.720:FF:000469">
    <property type="entry name" value="SDR family oxidoreductase"/>
    <property type="match status" value="1"/>
</dbReference>
<dbReference type="Gene3D" id="3.40.50.720">
    <property type="entry name" value="NAD(P)-binding Rossmann-like Domain"/>
    <property type="match status" value="1"/>
</dbReference>
<dbReference type="InterPro" id="IPR036291">
    <property type="entry name" value="NAD(P)-bd_dom_sf"/>
</dbReference>
<dbReference type="InterPro" id="IPR020904">
    <property type="entry name" value="Sc_DH/Rdtase_CS"/>
</dbReference>
<dbReference type="InterPro" id="IPR002347">
    <property type="entry name" value="SDR_fam"/>
</dbReference>
<dbReference type="PANTHER" id="PTHR24321">
    <property type="entry name" value="DEHYDROGENASES, SHORT CHAIN"/>
    <property type="match status" value="1"/>
</dbReference>
<dbReference type="PANTHER" id="PTHR24321:SF8">
    <property type="entry name" value="ESTRADIOL 17-BETA-DEHYDROGENASE 8-RELATED"/>
    <property type="match status" value="1"/>
</dbReference>
<dbReference type="Pfam" id="PF13561">
    <property type="entry name" value="adh_short_C2"/>
    <property type="match status" value="1"/>
</dbReference>
<dbReference type="PRINTS" id="PR00081">
    <property type="entry name" value="GDHRDH"/>
</dbReference>
<dbReference type="PRINTS" id="PR00080">
    <property type="entry name" value="SDRFAMILY"/>
</dbReference>
<dbReference type="SUPFAM" id="SSF51735">
    <property type="entry name" value="NAD(P)-binding Rossmann-fold domains"/>
    <property type="match status" value="1"/>
</dbReference>
<dbReference type="PROSITE" id="PS00061">
    <property type="entry name" value="ADH_SHORT"/>
    <property type="match status" value="1"/>
</dbReference>
<keyword id="KW-0002">3D-structure</keyword>
<keyword id="KW-0903">Direct protein sequencing</keyword>
<keyword id="KW-0520">NAD</keyword>
<keyword id="KW-0560">Oxidoreductase</keyword>
<sequence>MTERLAGKTALVTGAAQGIGKAIAARLAADGATVIVSDINAEGAKAAAASIGKKARAIAADISDPGSVKALFAEIQALTGGIDILVNNASIVPFVAWDDVDLDHWRKIIDVNLTGTFIVTRAGTDQMRAAGKAGRVISIASNTFFAGTPNMAAYVAAKGGVIGFTRALATELGKYNITANAVTPGLIESDGVKASPHNEAFGFVEMLQAMKGKGQPEHIADVVSFLASDDARWITGQTLNVDAGMVRH</sequence>
<gene>
    <name evidence="8" type="primary">pldh-t</name>
    <name type="ordered locus">mlr6807</name>
</gene>
<reference evidence="6 8" key="1">
    <citation type="journal article" date="2006" name="Arch. Biochem. Biophys.">
        <title>Identification of a new tetrameric pyridoxal 4-dehydrogenase as the second enzyme in the degradation pathway for pyridoxine in a nitrogen-fixing symbiotic bacterium, Mesorhizobium loti.</title>
        <authorList>
            <person name="Yokochi N."/>
            <person name="Nishimura S."/>
            <person name="Yoshikane Y."/>
            <person name="Ohnishi K."/>
            <person name="Yagi T."/>
        </authorList>
    </citation>
    <scope>NUCLEOTIDE SEQUENCE [GENOMIC DNA]</scope>
    <scope>PROTEIN SEQUENCE OF 1-10</scope>
    <scope>IDENTIFICATION</scope>
    <scope>FUNCTION</scope>
    <scope>CATALYTIC ACTIVITY</scope>
    <scope>BIOPHYSICOCHEMICAL PROPERTIES</scope>
    <scope>PATHWAY</scope>
    <scope>SUBUNIT</scope>
    <source>
        <strain evidence="4">LMG 29417 / CECT 9101 / MAFF 303099</strain>
    </source>
</reference>
<reference evidence="7" key="2">
    <citation type="journal article" date="2000" name="DNA Res.">
        <title>Complete genome structure of the nitrogen-fixing symbiotic bacterium Mesorhizobium loti.</title>
        <authorList>
            <person name="Kaneko T."/>
            <person name="Nakamura Y."/>
            <person name="Sato S."/>
            <person name="Asamizu E."/>
            <person name="Kato T."/>
            <person name="Sasamoto S."/>
            <person name="Watanabe A."/>
            <person name="Idesawa K."/>
            <person name="Ishikawa A."/>
            <person name="Kawashima K."/>
            <person name="Kimura T."/>
            <person name="Kishida Y."/>
            <person name="Kiyokawa C."/>
            <person name="Kohara M."/>
            <person name="Matsumoto M."/>
            <person name="Matsuno A."/>
            <person name="Mochizuki Y."/>
            <person name="Nakayama S."/>
            <person name="Nakazaki N."/>
            <person name="Shimpo S."/>
            <person name="Sugimoto M."/>
            <person name="Takeuchi C."/>
            <person name="Yamada M."/>
            <person name="Tabata S."/>
        </authorList>
    </citation>
    <scope>NUCLEOTIDE SEQUENCE [LARGE SCALE GENOMIC DNA]</scope>
    <source>
        <strain>LMG 29417 / CECT 9101 / MAFF 303099</strain>
    </source>
</reference>